<sequence length="298" mass="31854">MTSPSAPLTGSIVALVTPMHDDGSVDYPALRKLIDWHIAEGTDCIGVVGTTGESPTVNVEEHCEIIRVSVEQAAKRVPIMAGCGANSTAEAIELARFAKKVGADSQLQVVPYYNKPTQEGQYRHFKAIAEAVGDLPMVLYNVPGRSVADMQHETVLRLTQVPGIVGIKEATGNIERAQWLIRDVPKGFAVYSGDDPTAVALMLCGGQGNISVTANVAPRLMHELCVAALAGDTRRAMEIQFRLMPVHKQLFVEANPIPVKWAVQRMGLCGGALRLPMTPLSQGNEAVVEAALRAAGLL</sequence>
<accession>A1W4S3</accession>
<keyword id="KW-0028">Amino-acid biosynthesis</keyword>
<keyword id="KW-0963">Cytoplasm</keyword>
<keyword id="KW-0220">Diaminopimelate biosynthesis</keyword>
<keyword id="KW-0456">Lyase</keyword>
<keyword id="KW-0457">Lysine biosynthesis</keyword>
<keyword id="KW-0704">Schiff base</keyword>
<gene>
    <name evidence="1" type="primary">dapA</name>
    <name type="ordered locus">Ajs_1010</name>
</gene>
<name>DAPA_ACISJ</name>
<protein>
    <recommendedName>
        <fullName evidence="1">4-hydroxy-tetrahydrodipicolinate synthase</fullName>
        <shortName evidence="1">HTPA synthase</shortName>
        <ecNumber evidence="1">4.3.3.7</ecNumber>
    </recommendedName>
</protein>
<comment type="function">
    <text evidence="1">Catalyzes the condensation of (S)-aspartate-beta-semialdehyde [(S)-ASA] and pyruvate to 4-hydroxy-tetrahydrodipicolinate (HTPA).</text>
</comment>
<comment type="catalytic activity">
    <reaction evidence="1">
        <text>L-aspartate 4-semialdehyde + pyruvate = (2S,4S)-4-hydroxy-2,3,4,5-tetrahydrodipicolinate + H2O + H(+)</text>
        <dbReference type="Rhea" id="RHEA:34171"/>
        <dbReference type="ChEBI" id="CHEBI:15361"/>
        <dbReference type="ChEBI" id="CHEBI:15377"/>
        <dbReference type="ChEBI" id="CHEBI:15378"/>
        <dbReference type="ChEBI" id="CHEBI:67139"/>
        <dbReference type="ChEBI" id="CHEBI:537519"/>
        <dbReference type="EC" id="4.3.3.7"/>
    </reaction>
</comment>
<comment type="pathway">
    <text evidence="1">Amino-acid biosynthesis; L-lysine biosynthesis via DAP pathway; (S)-tetrahydrodipicolinate from L-aspartate: step 3/4.</text>
</comment>
<comment type="subunit">
    <text evidence="1">Homotetramer; dimer of dimers.</text>
</comment>
<comment type="subcellular location">
    <subcellularLocation>
        <location evidence="1">Cytoplasm</location>
    </subcellularLocation>
</comment>
<comment type="similarity">
    <text evidence="1">Belongs to the DapA family.</text>
</comment>
<comment type="caution">
    <text evidence="2">Was originally thought to be a dihydrodipicolinate synthase (DHDPS), catalyzing the condensation of (S)-aspartate-beta-semialdehyde [(S)-ASA] and pyruvate to dihydrodipicolinate (DHDP). However, it was shown in E.coli that the product of the enzymatic reaction is not dihydrodipicolinate but in fact (4S)-4-hydroxy-2,3,4,5-tetrahydro-(2S)-dipicolinic acid (HTPA), and that the consecutive dehydration reaction leading to DHDP is not spontaneous but catalyzed by DapB.</text>
</comment>
<feature type="chain" id="PRO_0000340931" description="4-hydroxy-tetrahydrodipicolinate synthase">
    <location>
        <begin position="1"/>
        <end position="298"/>
    </location>
</feature>
<feature type="active site" description="Proton donor/acceptor" evidence="1">
    <location>
        <position position="140"/>
    </location>
</feature>
<feature type="active site" description="Schiff-base intermediate with substrate" evidence="1">
    <location>
        <position position="168"/>
    </location>
</feature>
<feature type="binding site" evidence="1">
    <location>
        <position position="51"/>
    </location>
    <ligand>
        <name>pyruvate</name>
        <dbReference type="ChEBI" id="CHEBI:15361"/>
    </ligand>
</feature>
<feature type="binding site" evidence="1">
    <location>
        <position position="210"/>
    </location>
    <ligand>
        <name>pyruvate</name>
        <dbReference type="ChEBI" id="CHEBI:15361"/>
    </ligand>
</feature>
<feature type="site" description="Part of a proton relay during catalysis" evidence="1">
    <location>
        <position position="50"/>
    </location>
</feature>
<feature type="site" description="Part of a proton relay during catalysis" evidence="1">
    <location>
        <position position="113"/>
    </location>
</feature>
<dbReference type="EC" id="4.3.3.7" evidence="1"/>
<dbReference type="EMBL" id="CP000539">
    <property type="protein sequence ID" value="ABM41248.1"/>
    <property type="molecule type" value="Genomic_DNA"/>
</dbReference>
<dbReference type="SMR" id="A1W4S3"/>
<dbReference type="STRING" id="232721.Ajs_1010"/>
<dbReference type="KEGG" id="ajs:Ajs_1010"/>
<dbReference type="eggNOG" id="COG0329">
    <property type="taxonomic scope" value="Bacteria"/>
</dbReference>
<dbReference type="HOGENOM" id="CLU_049343_7_1_4"/>
<dbReference type="UniPathway" id="UPA00034">
    <property type="reaction ID" value="UER00017"/>
</dbReference>
<dbReference type="Proteomes" id="UP000000645">
    <property type="component" value="Chromosome"/>
</dbReference>
<dbReference type="GO" id="GO:0005829">
    <property type="term" value="C:cytosol"/>
    <property type="evidence" value="ECO:0007669"/>
    <property type="project" value="TreeGrafter"/>
</dbReference>
<dbReference type="GO" id="GO:0008840">
    <property type="term" value="F:4-hydroxy-tetrahydrodipicolinate synthase activity"/>
    <property type="evidence" value="ECO:0007669"/>
    <property type="project" value="UniProtKB-UniRule"/>
</dbReference>
<dbReference type="GO" id="GO:0019877">
    <property type="term" value="P:diaminopimelate biosynthetic process"/>
    <property type="evidence" value="ECO:0007669"/>
    <property type="project" value="UniProtKB-UniRule"/>
</dbReference>
<dbReference type="GO" id="GO:0009089">
    <property type="term" value="P:lysine biosynthetic process via diaminopimelate"/>
    <property type="evidence" value="ECO:0007669"/>
    <property type="project" value="UniProtKB-UniRule"/>
</dbReference>
<dbReference type="CDD" id="cd00950">
    <property type="entry name" value="DHDPS"/>
    <property type="match status" value="1"/>
</dbReference>
<dbReference type="Gene3D" id="3.20.20.70">
    <property type="entry name" value="Aldolase class I"/>
    <property type="match status" value="1"/>
</dbReference>
<dbReference type="HAMAP" id="MF_00418">
    <property type="entry name" value="DapA"/>
    <property type="match status" value="1"/>
</dbReference>
<dbReference type="InterPro" id="IPR013785">
    <property type="entry name" value="Aldolase_TIM"/>
</dbReference>
<dbReference type="InterPro" id="IPR005263">
    <property type="entry name" value="DapA"/>
</dbReference>
<dbReference type="InterPro" id="IPR002220">
    <property type="entry name" value="DapA-like"/>
</dbReference>
<dbReference type="InterPro" id="IPR020625">
    <property type="entry name" value="Schiff_base-form_aldolases_AS"/>
</dbReference>
<dbReference type="NCBIfam" id="TIGR00674">
    <property type="entry name" value="dapA"/>
    <property type="match status" value="1"/>
</dbReference>
<dbReference type="PANTHER" id="PTHR12128:SF66">
    <property type="entry name" value="4-HYDROXY-2-OXOGLUTARATE ALDOLASE, MITOCHONDRIAL"/>
    <property type="match status" value="1"/>
</dbReference>
<dbReference type="PANTHER" id="PTHR12128">
    <property type="entry name" value="DIHYDRODIPICOLINATE SYNTHASE"/>
    <property type="match status" value="1"/>
</dbReference>
<dbReference type="Pfam" id="PF00701">
    <property type="entry name" value="DHDPS"/>
    <property type="match status" value="1"/>
</dbReference>
<dbReference type="PIRSF" id="PIRSF001365">
    <property type="entry name" value="DHDPS"/>
    <property type="match status" value="1"/>
</dbReference>
<dbReference type="PRINTS" id="PR00146">
    <property type="entry name" value="DHPICSNTHASE"/>
</dbReference>
<dbReference type="SMART" id="SM01130">
    <property type="entry name" value="DHDPS"/>
    <property type="match status" value="1"/>
</dbReference>
<dbReference type="SUPFAM" id="SSF51569">
    <property type="entry name" value="Aldolase"/>
    <property type="match status" value="1"/>
</dbReference>
<dbReference type="PROSITE" id="PS00666">
    <property type="entry name" value="DHDPS_2"/>
    <property type="match status" value="1"/>
</dbReference>
<evidence type="ECO:0000255" key="1">
    <source>
        <dbReference type="HAMAP-Rule" id="MF_00418"/>
    </source>
</evidence>
<evidence type="ECO:0000305" key="2"/>
<organism>
    <name type="scientific">Acidovorax sp. (strain JS42)</name>
    <dbReference type="NCBI Taxonomy" id="232721"/>
    <lineage>
        <taxon>Bacteria</taxon>
        <taxon>Pseudomonadati</taxon>
        <taxon>Pseudomonadota</taxon>
        <taxon>Betaproteobacteria</taxon>
        <taxon>Burkholderiales</taxon>
        <taxon>Comamonadaceae</taxon>
        <taxon>Acidovorax</taxon>
    </lineage>
</organism>
<proteinExistence type="inferred from homology"/>
<reference key="1">
    <citation type="submission" date="2006-12" db="EMBL/GenBank/DDBJ databases">
        <title>Complete sequence of chromosome 1 of Acidovorax sp. JS42.</title>
        <authorList>
            <person name="Copeland A."/>
            <person name="Lucas S."/>
            <person name="Lapidus A."/>
            <person name="Barry K."/>
            <person name="Detter J.C."/>
            <person name="Glavina del Rio T."/>
            <person name="Dalin E."/>
            <person name="Tice H."/>
            <person name="Pitluck S."/>
            <person name="Chertkov O."/>
            <person name="Brettin T."/>
            <person name="Bruce D."/>
            <person name="Han C."/>
            <person name="Tapia R."/>
            <person name="Gilna P."/>
            <person name="Schmutz J."/>
            <person name="Larimer F."/>
            <person name="Land M."/>
            <person name="Hauser L."/>
            <person name="Kyrpides N."/>
            <person name="Kim E."/>
            <person name="Stahl D."/>
            <person name="Richardson P."/>
        </authorList>
    </citation>
    <scope>NUCLEOTIDE SEQUENCE [LARGE SCALE GENOMIC DNA]</scope>
    <source>
        <strain>JS42</strain>
    </source>
</reference>